<name>Y155_ATV</name>
<proteinExistence type="predicted"/>
<protein>
    <recommendedName>
        <fullName>Uncharacterized protein ORF155</fullName>
    </recommendedName>
</protein>
<accession>Q3V4S0</accession>
<organismHost>
    <name type="scientific">Acidianus convivator</name>
    <dbReference type="NCBI Taxonomy" id="269667"/>
</organismHost>
<sequence length="155" mass="17533">MPGQTQKTPAFTTDQFLDLINRLFGLDLAIVSERNIPLIINRLDDINLKLLLAKMMVNGMDEFIPFRHSPEGIRSINVEQIPPASGDPVDTPDYRLSIEYKNGEQDNFICTYDETKWKCTARDVDEITSIIGKRSQANSKNDSNSKDDLPNPFSV</sequence>
<feature type="chain" id="PRO_0000389044" description="Uncharacterized protein ORF155">
    <location>
        <begin position="1"/>
        <end position="155"/>
    </location>
</feature>
<feature type="region of interest" description="Disordered" evidence="1">
    <location>
        <begin position="135"/>
        <end position="155"/>
    </location>
</feature>
<reference key="1">
    <citation type="journal article" date="2005" name="Nature">
        <title>Virology: independent virus development outside a host.</title>
        <authorList>
            <person name="Haring M."/>
            <person name="Vestergaard G."/>
            <person name="Rachel R."/>
            <person name="Chen L."/>
            <person name="Garrett R.A."/>
            <person name="Prangishvili D."/>
        </authorList>
    </citation>
    <scope>NUCLEOTIDE SEQUENCE [GENOMIC DNA]</scope>
</reference>
<evidence type="ECO:0000256" key="1">
    <source>
        <dbReference type="SAM" id="MobiDB-lite"/>
    </source>
</evidence>
<organism>
    <name type="scientific">Acidianus two-tailed virus</name>
    <name type="common">ATV</name>
    <dbReference type="NCBI Taxonomy" id="315953"/>
    <lineage>
        <taxon>Viruses</taxon>
        <taxon>Viruses incertae sedis</taxon>
        <taxon>Bicaudaviridae</taxon>
        <taxon>Bicaudavirus</taxon>
    </lineage>
</organism>
<keyword id="KW-1185">Reference proteome</keyword>
<dbReference type="EMBL" id="AJ888457">
    <property type="protein sequence ID" value="CAI59894.1"/>
    <property type="molecule type" value="Genomic_DNA"/>
</dbReference>
<dbReference type="RefSeq" id="YP_319862.1">
    <property type="nucleotide sequence ID" value="NC_007409.1"/>
</dbReference>
<dbReference type="GeneID" id="4484250"/>
<dbReference type="KEGG" id="vg:4484250"/>
<dbReference type="Proteomes" id="UP000002150">
    <property type="component" value="Genome"/>
</dbReference>